<gene>
    <name type="primary">sur2</name>
    <name type="ORF">SPBC887.15c</name>
</gene>
<reference key="1">
    <citation type="journal article" date="2002" name="Nature">
        <title>The genome sequence of Schizosaccharomyces pombe.</title>
        <authorList>
            <person name="Wood V."/>
            <person name="Gwilliam R."/>
            <person name="Rajandream M.A."/>
            <person name="Lyne M.H."/>
            <person name="Lyne R."/>
            <person name="Stewart A."/>
            <person name="Sgouros J.G."/>
            <person name="Peat N."/>
            <person name="Hayles J."/>
            <person name="Baker S.G."/>
            <person name="Basham D."/>
            <person name="Bowman S."/>
            <person name="Brooks K."/>
            <person name="Brown D."/>
            <person name="Brown S."/>
            <person name="Chillingworth T."/>
            <person name="Churcher C.M."/>
            <person name="Collins M."/>
            <person name="Connor R."/>
            <person name="Cronin A."/>
            <person name="Davis P."/>
            <person name="Feltwell T."/>
            <person name="Fraser A."/>
            <person name="Gentles S."/>
            <person name="Goble A."/>
            <person name="Hamlin N."/>
            <person name="Harris D.E."/>
            <person name="Hidalgo J."/>
            <person name="Hodgson G."/>
            <person name="Holroyd S."/>
            <person name="Hornsby T."/>
            <person name="Howarth S."/>
            <person name="Huckle E.J."/>
            <person name="Hunt S."/>
            <person name="Jagels K."/>
            <person name="James K.D."/>
            <person name="Jones L."/>
            <person name="Jones M."/>
            <person name="Leather S."/>
            <person name="McDonald S."/>
            <person name="McLean J."/>
            <person name="Mooney P."/>
            <person name="Moule S."/>
            <person name="Mungall K.L."/>
            <person name="Murphy L.D."/>
            <person name="Niblett D."/>
            <person name="Odell C."/>
            <person name="Oliver K."/>
            <person name="O'Neil S."/>
            <person name="Pearson D."/>
            <person name="Quail M.A."/>
            <person name="Rabbinowitsch E."/>
            <person name="Rutherford K.M."/>
            <person name="Rutter S."/>
            <person name="Saunders D."/>
            <person name="Seeger K."/>
            <person name="Sharp S."/>
            <person name="Skelton J."/>
            <person name="Simmonds M.N."/>
            <person name="Squares R."/>
            <person name="Squares S."/>
            <person name="Stevens K."/>
            <person name="Taylor K."/>
            <person name="Taylor R.G."/>
            <person name="Tivey A."/>
            <person name="Walsh S.V."/>
            <person name="Warren T."/>
            <person name="Whitehead S."/>
            <person name="Woodward J.R."/>
            <person name="Volckaert G."/>
            <person name="Aert R."/>
            <person name="Robben J."/>
            <person name="Grymonprez B."/>
            <person name="Weltjens I."/>
            <person name="Vanstreels E."/>
            <person name="Rieger M."/>
            <person name="Schaefer M."/>
            <person name="Mueller-Auer S."/>
            <person name="Gabel C."/>
            <person name="Fuchs M."/>
            <person name="Duesterhoeft A."/>
            <person name="Fritzc C."/>
            <person name="Holzer E."/>
            <person name="Moestl D."/>
            <person name="Hilbert H."/>
            <person name="Borzym K."/>
            <person name="Langer I."/>
            <person name="Beck A."/>
            <person name="Lehrach H."/>
            <person name="Reinhardt R."/>
            <person name="Pohl T.M."/>
            <person name="Eger P."/>
            <person name="Zimmermann W."/>
            <person name="Wedler H."/>
            <person name="Wambutt R."/>
            <person name="Purnelle B."/>
            <person name="Goffeau A."/>
            <person name="Cadieu E."/>
            <person name="Dreano S."/>
            <person name="Gloux S."/>
            <person name="Lelaure V."/>
            <person name="Mottier S."/>
            <person name="Galibert F."/>
            <person name="Aves S.J."/>
            <person name="Xiang Z."/>
            <person name="Hunt C."/>
            <person name="Moore K."/>
            <person name="Hurst S.M."/>
            <person name="Lucas M."/>
            <person name="Rochet M."/>
            <person name="Gaillardin C."/>
            <person name="Tallada V.A."/>
            <person name="Garzon A."/>
            <person name="Thode G."/>
            <person name="Daga R.R."/>
            <person name="Cruzado L."/>
            <person name="Jimenez J."/>
            <person name="Sanchez M."/>
            <person name="del Rey F."/>
            <person name="Benito J."/>
            <person name="Dominguez A."/>
            <person name="Revuelta J.L."/>
            <person name="Moreno S."/>
            <person name="Armstrong J."/>
            <person name="Forsburg S.L."/>
            <person name="Cerutti L."/>
            <person name="Lowe T."/>
            <person name="McCombie W.R."/>
            <person name="Paulsen I."/>
            <person name="Potashkin J."/>
            <person name="Shpakovski G.V."/>
            <person name="Ussery D."/>
            <person name="Barrell B.G."/>
            <person name="Nurse P."/>
        </authorList>
    </citation>
    <scope>NUCLEOTIDE SEQUENCE [LARGE SCALE GENOMIC DNA]</scope>
    <source>
        <strain>972 / ATCC 24843</strain>
    </source>
</reference>
<reference key="2">
    <citation type="journal article" date="2006" name="Nat. Biotechnol.">
        <title>ORFeome cloning and global analysis of protein localization in the fission yeast Schizosaccharomyces pombe.</title>
        <authorList>
            <person name="Matsuyama A."/>
            <person name="Arai R."/>
            <person name="Yashiroda Y."/>
            <person name="Shirai A."/>
            <person name="Kamata A."/>
            <person name="Sekido S."/>
            <person name="Kobayashi Y."/>
            <person name="Hashimoto A."/>
            <person name="Hamamoto M."/>
            <person name="Hiraoka Y."/>
            <person name="Horinouchi S."/>
            <person name="Yoshida M."/>
        </authorList>
    </citation>
    <scope>SUBCELLULAR LOCATION [LARGE SCALE ANALYSIS]</scope>
</reference>
<proteinExistence type="inferred from homology"/>
<protein>
    <recommendedName>
        <fullName>Sphingolipid C4-hydroxylase sur2</fullName>
        <ecNumber>1.-.-.-</ecNumber>
    </recommendedName>
    <alternativeName>
        <fullName>Syringomycin response protein 2</fullName>
    </alternativeName>
</protein>
<sequence length="293" mass="34191">MVTTVEMLTTWNPVTVSLVSPVIIYWVASAFFGFLHYIELPVFEKYRIHPPEEIARRNRVPQMAVVKAVLFQQLCEVVVGIALAMFEGYPEPIDEAKQMLRYEAFFSKNLPALLQVAPFAPKLAYNFIVPAFQYFFAFFIIDSWQYFWHRYLHYNKKLYNMIHAHHHRLQVPYAMGALYNHPFEGLILDTFGAGVAYLAAGLSPQQAVIFFTLSTLKTVDDHCGYVFPYDPLQMFFANNARYHDLHHQPYGFQKNFSQPFFTFWDHVLGTYMPPKSETPYEKKQKAKNAKKVN</sequence>
<accession>O94298</accession>
<evidence type="ECO:0000250" key="1"/>
<evidence type="ECO:0000255" key="2"/>
<evidence type="ECO:0000269" key="3">
    <source>
    </source>
</evidence>
<evidence type="ECO:0000305" key="4"/>
<keyword id="KW-0256">Endoplasmic reticulum</keyword>
<keyword id="KW-0444">Lipid biosynthesis</keyword>
<keyword id="KW-0443">Lipid metabolism</keyword>
<keyword id="KW-0472">Membrane</keyword>
<keyword id="KW-0560">Oxidoreductase</keyword>
<keyword id="KW-1185">Reference proteome</keyword>
<keyword id="KW-0812">Transmembrane</keyword>
<keyword id="KW-1133">Transmembrane helix</keyword>
<feature type="chain" id="PRO_0000317336" description="Sphingolipid C4-hydroxylase sur2">
    <location>
        <begin position="1"/>
        <end position="293"/>
    </location>
</feature>
<feature type="transmembrane region" description="Helical" evidence="2">
    <location>
        <begin position="18"/>
        <end position="38"/>
    </location>
</feature>
<feature type="transmembrane region" description="Helical" evidence="2">
    <location>
        <begin position="68"/>
        <end position="88"/>
    </location>
</feature>
<feature type="transmembrane region" description="Helical" evidence="2">
    <location>
        <begin position="127"/>
        <end position="147"/>
    </location>
</feature>
<feature type="domain" description="Fatty acid hydroxylase" evidence="2">
    <location>
        <begin position="136"/>
        <end position="270"/>
    </location>
</feature>
<comment type="function">
    <text evidence="1">Required for hydroxylation of C-4 in the sphingoid moiety of ceramide. Involved in the response to syringomycin (By similarity).</text>
</comment>
<comment type="pathway">
    <text>Membrane lipid metabolism; sphingolipid biosynthesis.</text>
</comment>
<comment type="subcellular location">
    <subcellularLocation>
        <location evidence="3">Endoplasmic reticulum membrane</location>
        <topology evidence="3">Multi-pass membrane protein</topology>
    </subcellularLocation>
</comment>
<comment type="similarity">
    <text evidence="4">Belongs to the sterol desaturase family.</text>
</comment>
<dbReference type="EC" id="1.-.-.-"/>
<dbReference type="EMBL" id="CU329671">
    <property type="protein sequence ID" value="CAA21900.1"/>
    <property type="molecule type" value="Genomic_DNA"/>
</dbReference>
<dbReference type="PIR" id="T40740">
    <property type="entry name" value="T40740"/>
</dbReference>
<dbReference type="RefSeq" id="NP_596489.1">
    <property type="nucleotide sequence ID" value="NM_001022409.2"/>
</dbReference>
<dbReference type="BioGRID" id="277739">
    <property type="interactions" value="4"/>
</dbReference>
<dbReference type="FunCoup" id="O94298">
    <property type="interactions" value="115"/>
</dbReference>
<dbReference type="IntAct" id="O94298">
    <property type="interactions" value="1"/>
</dbReference>
<dbReference type="STRING" id="284812.O94298"/>
<dbReference type="PaxDb" id="4896-SPBC887.15c.1"/>
<dbReference type="EnsemblFungi" id="SPBC887.15c.1">
    <property type="protein sequence ID" value="SPBC887.15c.1:pep"/>
    <property type="gene ID" value="SPBC887.15c"/>
</dbReference>
<dbReference type="GeneID" id="2541225"/>
<dbReference type="KEGG" id="spo:2541225"/>
<dbReference type="PomBase" id="SPBC887.15c">
    <property type="gene designation" value="sur2"/>
</dbReference>
<dbReference type="VEuPathDB" id="FungiDB:SPBC887.15c"/>
<dbReference type="eggNOG" id="KOG0874">
    <property type="taxonomic scope" value="Eukaryota"/>
</dbReference>
<dbReference type="HOGENOM" id="CLU_043293_1_1_1"/>
<dbReference type="InParanoid" id="O94298"/>
<dbReference type="OMA" id="FFIFWDR"/>
<dbReference type="PhylomeDB" id="O94298"/>
<dbReference type="UniPathway" id="UPA00786"/>
<dbReference type="PRO" id="PR:O94298"/>
<dbReference type="Proteomes" id="UP000002485">
    <property type="component" value="Chromosome II"/>
</dbReference>
<dbReference type="GO" id="GO:0005783">
    <property type="term" value="C:endoplasmic reticulum"/>
    <property type="evidence" value="ECO:0007005"/>
    <property type="project" value="PomBase"/>
</dbReference>
<dbReference type="GO" id="GO:0005789">
    <property type="term" value="C:endoplasmic reticulum membrane"/>
    <property type="evidence" value="ECO:0000318"/>
    <property type="project" value="GO_Central"/>
</dbReference>
<dbReference type="GO" id="GO:0005506">
    <property type="term" value="F:iron ion binding"/>
    <property type="evidence" value="ECO:0000255"/>
    <property type="project" value="PomBase"/>
</dbReference>
<dbReference type="GO" id="GO:0042284">
    <property type="term" value="F:sphingolipid delta-4 desaturase activity"/>
    <property type="evidence" value="ECO:0000315"/>
    <property type="project" value="PomBase"/>
</dbReference>
<dbReference type="GO" id="GO:0051999">
    <property type="term" value="P:mannosyl-inositol phosphorylceramide biosynthetic process"/>
    <property type="evidence" value="ECO:0000315"/>
    <property type="project" value="PomBase"/>
</dbReference>
<dbReference type="GO" id="GO:0006675">
    <property type="term" value="P:mannosyl-inositol phosphorylceramide metabolic process"/>
    <property type="evidence" value="ECO:0000315"/>
    <property type="project" value="PomBase"/>
</dbReference>
<dbReference type="GO" id="GO:0030148">
    <property type="term" value="P:sphingolipid biosynthetic process"/>
    <property type="evidence" value="ECO:0000315"/>
    <property type="project" value="PomBase"/>
</dbReference>
<dbReference type="InterPro" id="IPR006694">
    <property type="entry name" value="Fatty_acid_hydroxylase"/>
</dbReference>
<dbReference type="InterPro" id="IPR050307">
    <property type="entry name" value="Sterol_Desaturase_Related"/>
</dbReference>
<dbReference type="PANTHER" id="PTHR11863">
    <property type="entry name" value="STEROL DESATURASE"/>
    <property type="match status" value="1"/>
</dbReference>
<dbReference type="Pfam" id="PF04116">
    <property type="entry name" value="FA_hydroxylase"/>
    <property type="match status" value="1"/>
</dbReference>
<name>SUR2_SCHPO</name>
<organism>
    <name type="scientific">Schizosaccharomyces pombe (strain 972 / ATCC 24843)</name>
    <name type="common">Fission yeast</name>
    <dbReference type="NCBI Taxonomy" id="284812"/>
    <lineage>
        <taxon>Eukaryota</taxon>
        <taxon>Fungi</taxon>
        <taxon>Dikarya</taxon>
        <taxon>Ascomycota</taxon>
        <taxon>Taphrinomycotina</taxon>
        <taxon>Schizosaccharomycetes</taxon>
        <taxon>Schizosaccharomycetales</taxon>
        <taxon>Schizosaccharomycetaceae</taxon>
        <taxon>Schizosaccharomyces</taxon>
    </lineage>
</organism>